<gene>
    <name evidence="8" type="primary">TRAV35</name>
</gene>
<accession>P0DPF4</accession>
<name>TVA35_HUMAN</name>
<proteinExistence type="inferred from homology"/>
<comment type="function">
    <text evidence="3 5 6 7">V region of the variable domain of T cell receptor (TR) alpha chain that participates in the antigen recognition (PubMed:24600447). Alpha-beta T cell receptors are antigen specific receptors which are essential to the immune response and are present on the cell surface of T lymphocytes. Recognize peptide-major histocompatibility (MH) (pMH) complexes that are displayed by antigen presenting cells (APC), a prerequisite for efficient T cell adaptive immunity against pathogens (PubMed:25493333). Binding of alpha-beta TR to pMH complex initiates TR-CD3 clustering on the cell surface and intracellular activation of LCK that phosphorylates the ITAM motifs of CD3G, CD3D, CD3E and CD247 enabling the recruitment of ZAP70. In turn ZAP70 phosphorylates LAT, which recruits numerous signaling molecules to form the LAT signalosome. The LAT signalosome propagates signal branching to three major signaling pathways, the calcium, the mitogen-activated protein kinase (MAPK) kinase and the nuclear factor NF-kappa-B (NF-kB) pathways, leading to the mobilization of transcription factors that are critical for gene expression and essential for T cell growth and differentiation (PubMed:23524462). The T cell repertoire is generated in the thymus, by V-(D)-J rearrangement. This repertoire is then shaped by intrathymic selection events to generate a peripheral T cell pool of self-MH restricted, non-autoaggressive T cells. Post-thymic interaction of alpha-beta TR with the pMH complexes shapes TR structural and functional avidity (PubMed:15040585).</text>
</comment>
<comment type="subunit">
    <text evidence="4">Alpha-beta TR is a heterodimer composed of an alpha and beta chain; disulfide-linked. The alpha-beta TR is associated with the transmembrane signaling CD3 coreceptor proteins to form the TR-CD3 (TcR or TCR). The assembly of alpha-beta TR heterodimers with CD3 occurs in the endoplasmic reticulum where a single alpha-beta TR heterodimer associates with one CD3D-CD3E heterodimer, one CD3G-CD3E heterodimer and one CD247 homodimer forming a stable octameric structure. CD3D-CD3E and CD3G-CD3E heterodimers preferentially associate with TR alpha and TR beta chains, respectively. The association of the CD247 homodimer is the last step of TcR assembly in the endoplasmic reticulum and is required for transport to the cell surface.</text>
</comment>
<comment type="subcellular location">
    <subcellularLocation>
        <location evidence="4">Cell membrane</location>
    </subcellularLocation>
</comment>
<comment type="polymorphism">
    <text evidence="9">There are several alleles. The sequence shown is that of IMGT allele TRAV35*01 that is not represented on the reference genome assembly (GRCh38/hg38). The sequence of the reference genome assembly (GRCh38/hg38) is a pseudogene due to a stop codon polymorphism at position 50.</text>
</comment>
<keyword id="KW-1064">Adaptive immunity</keyword>
<keyword id="KW-1003">Cell membrane</keyword>
<keyword id="KW-1015">Disulfide bond</keyword>
<keyword id="KW-0325">Glycoprotein</keyword>
<keyword id="KW-0391">Immunity</keyword>
<keyword id="KW-0393">Immunoglobulin domain</keyword>
<keyword id="KW-0472">Membrane</keyword>
<keyword id="KW-0675">Receptor</keyword>
<keyword id="KW-1185">Reference proteome</keyword>
<keyword id="KW-0732">Signal</keyword>
<keyword id="KW-1279">T cell receptor</keyword>
<reference key="1">
    <citation type="journal article" date="2003" name="Nature">
        <title>The DNA sequence and analysis of human chromosome 14.</title>
        <authorList>
            <person name="Heilig R."/>
            <person name="Eckenberg R."/>
            <person name="Petit J.-L."/>
            <person name="Fonknechten N."/>
            <person name="Da Silva C."/>
            <person name="Cattolico L."/>
            <person name="Levy M."/>
            <person name="Barbe V."/>
            <person name="De Berardinis V."/>
            <person name="Ureta-Vidal A."/>
            <person name="Pelletier E."/>
            <person name="Vico V."/>
            <person name="Anthouard V."/>
            <person name="Rowen L."/>
            <person name="Madan A."/>
            <person name="Qin S."/>
            <person name="Sun H."/>
            <person name="Du H."/>
            <person name="Pepin K."/>
            <person name="Artiguenave F."/>
            <person name="Robert C."/>
            <person name="Cruaud C."/>
            <person name="Bruels T."/>
            <person name="Jaillon O."/>
            <person name="Friedlander L."/>
            <person name="Samson G."/>
            <person name="Brottier P."/>
            <person name="Cure S."/>
            <person name="Segurens B."/>
            <person name="Aniere F."/>
            <person name="Samain S."/>
            <person name="Crespeau H."/>
            <person name="Abbasi N."/>
            <person name="Aiach N."/>
            <person name="Boscus D."/>
            <person name="Dickhoff R."/>
            <person name="Dors M."/>
            <person name="Dubois I."/>
            <person name="Friedman C."/>
            <person name="Gouyvenoux M."/>
            <person name="James R."/>
            <person name="Madan A."/>
            <person name="Mairey-Estrada B."/>
            <person name="Mangenot S."/>
            <person name="Martins N."/>
            <person name="Menard M."/>
            <person name="Oztas S."/>
            <person name="Ratcliffe A."/>
            <person name="Shaffer T."/>
            <person name="Trask B."/>
            <person name="Vacherie B."/>
            <person name="Bellemere C."/>
            <person name="Belser C."/>
            <person name="Besnard-Gonnet M."/>
            <person name="Bartol-Mavel D."/>
            <person name="Boutard M."/>
            <person name="Briez-Silla S."/>
            <person name="Combette S."/>
            <person name="Dufosse-Laurent V."/>
            <person name="Ferron C."/>
            <person name="Lechaplais C."/>
            <person name="Louesse C."/>
            <person name="Muselet D."/>
            <person name="Magdelenat G."/>
            <person name="Pateau E."/>
            <person name="Petit E."/>
            <person name="Sirvain-Trukniewicz P."/>
            <person name="Trybou A."/>
            <person name="Vega-Czarny N."/>
            <person name="Bataille E."/>
            <person name="Bluet E."/>
            <person name="Bordelais I."/>
            <person name="Dubois M."/>
            <person name="Dumont C."/>
            <person name="Guerin T."/>
            <person name="Haffray S."/>
            <person name="Hammadi R."/>
            <person name="Muanga J."/>
            <person name="Pellouin V."/>
            <person name="Robert D."/>
            <person name="Wunderle E."/>
            <person name="Gauguet G."/>
            <person name="Roy A."/>
            <person name="Sainte-Marthe L."/>
            <person name="Verdier J."/>
            <person name="Verdier-Discala C."/>
            <person name="Hillier L.W."/>
            <person name="Fulton L."/>
            <person name="McPherson J."/>
            <person name="Matsuda F."/>
            <person name="Wilson R."/>
            <person name="Scarpelli C."/>
            <person name="Gyapay G."/>
            <person name="Wincker P."/>
            <person name="Saurin W."/>
            <person name="Quetier F."/>
            <person name="Waterston R."/>
            <person name="Hood L."/>
            <person name="Weissenbach J."/>
        </authorList>
    </citation>
    <scope>NUCLEOTIDE SEQUENCE [LARGE SCALE GENOMIC DNA] (IMGT ALLELE TRAV35*01)</scope>
</reference>
<reference key="2">
    <citation type="book" date="2001" name="The T Cell Receptor FactsBook.">
        <title>The T Cell Receptor FactsBook.</title>
        <editorList>
            <person name="Lefranc M.P."/>
            <person name="Lefranc G."/>
        </editorList>
        <authorList>
            <person name="Lefranc M.P."/>
            <person name="Lefranc G."/>
        </authorList>
    </citation>
    <scope>NOMENCLATURE</scope>
</reference>
<reference key="3">
    <citation type="journal article" date="2004" name="Nat. Rev. Immunol.">
        <title>The many important facets of T-cell repertoire diversity.</title>
        <authorList>
            <person name="Nikolich-Zugich J."/>
            <person name="Slifka M.K."/>
            <person name="Messaoudi I."/>
        </authorList>
    </citation>
    <scope>REVIEW ON T CELL REPERTOIRE DIVERSITY</scope>
</reference>
<reference key="4">
    <citation type="journal article" date="2010" name="Cold Spring Harb. Perspect. Biol.">
        <title>Structural biology of the T-cell receptor: insights into receptor assembly, ligand recognition, and initiation of signaling.</title>
        <authorList>
            <person name="Wucherpfennig K.W."/>
            <person name="Gagnon E."/>
            <person name="Call M.J."/>
            <person name="Huseby E.S."/>
            <person name="Call M.E."/>
        </authorList>
    </citation>
    <scope>REVIEW ON T CELL RECEPTOR-CD3 COMPLEX ASSEMBLY</scope>
    <scope>SUBCELLULAR LOCATION</scope>
</reference>
<reference key="5">
    <citation type="journal article" date="2013" name="Nat. Rev. Immunol.">
        <title>T cell receptor signalling networks: branched, diversified and bounded.</title>
        <authorList>
            <person name="Brownlie R.J."/>
            <person name="Zamoyska R."/>
        </authorList>
    </citation>
    <scope>REVIEW ON T CELL RECEPTOR SIGNALING</scope>
</reference>
<reference key="6">
    <citation type="journal article" date="2014" name="Front. Immunol.">
        <title>Immunoglobulin and T Cell Receptor Genes: IMGT((R)) and the Birth and Rise of Immunoinformatics.</title>
        <authorList>
            <person name="Lefranc M.P."/>
        </authorList>
    </citation>
    <scope>NOMENCLATURE</scope>
</reference>
<reference key="7">
    <citation type="journal article" date="2015" name="Annu. Rev. Immunol.">
        <title>T cell antigen receptor recognition of antigen-presenting molecules.</title>
        <authorList>
            <person name="Rossjohn J."/>
            <person name="Gras S."/>
            <person name="Miles J.J."/>
            <person name="Turner S.J."/>
            <person name="Godfrey D.I."/>
            <person name="McCluskey J."/>
        </authorList>
    </citation>
    <scope>REVIEW ON FUNCTION</scope>
</reference>
<dbReference type="SMR" id="P0DPF4"/>
<dbReference type="FunCoup" id="P0DPF4">
    <property type="interactions" value="334"/>
</dbReference>
<dbReference type="IMGT_GENE-DB" id="TRAV35"/>
<dbReference type="GlyCosmos" id="P0DPF4">
    <property type="glycosylation" value="2 sites, No reported glycans"/>
</dbReference>
<dbReference type="GlyGen" id="P0DPF4">
    <property type="glycosylation" value="2 sites"/>
</dbReference>
<dbReference type="PeptideAtlas" id="P0DPF4"/>
<dbReference type="AGR" id="HGNC:12134"/>
<dbReference type="GeneCards" id="TRAV35"/>
<dbReference type="HGNC" id="HGNC:12134">
    <property type="gene designation" value="TRAV35"/>
</dbReference>
<dbReference type="neXtProt" id="NX_P0DPF4"/>
<dbReference type="InParanoid" id="P0DPF4"/>
<dbReference type="PAN-GO" id="P0DPF4">
    <property type="GO annotations" value="1 GO annotation based on evolutionary models"/>
</dbReference>
<dbReference type="ChiTaRS" id="TRAV35">
    <property type="organism name" value="human"/>
</dbReference>
<dbReference type="Pharos" id="P0DPF4">
    <property type="development level" value="Tdark"/>
</dbReference>
<dbReference type="PRO" id="PR:P0DPF4"/>
<dbReference type="Proteomes" id="UP000005640">
    <property type="component" value="Unplaced"/>
</dbReference>
<dbReference type="GO" id="GO:0042101">
    <property type="term" value="C:T cell receptor complex"/>
    <property type="evidence" value="ECO:0007669"/>
    <property type="project" value="UniProtKB-KW"/>
</dbReference>
<dbReference type="GO" id="GO:0002250">
    <property type="term" value="P:adaptive immune response"/>
    <property type="evidence" value="ECO:0007669"/>
    <property type="project" value="UniProtKB-KW"/>
</dbReference>
<dbReference type="GO" id="GO:0009617">
    <property type="term" value="P:response to bacterium"/>
    <property type="evidence" value="ECO:0000318"/>
    <property type="project" value="GO_Central"/>
</dbReference>
<dbReference type="Gene3D" id="2.60.40.10">
    <property type="entry name" value="Immunoglobulins"/>
    <property type="match status" value="1"/>
</dbReference>
<dbReference type="InterPro" id="IPR007110">
    <property type="entry name" value="Ig-like_dom"/>
</dbReference>
<dbReference type="InterPro" id="IPR036179">
    <property type="entry name" value="Ig-like_dom_sf"/>
</dbReference>
<dbReference type="InterPro" id="IPR013783">
    <property type="entry name" value="Ig-like_fold"/>
</dbReference>
<dbReference type="InterPro" id="IPR013106">
    <property type="entry name" value="Ig_V-set"/>
</dbReference>
<dbReference type="InterPro" id="IPR051896">
    <property type="entry name" value="TCR_alpha_variable"/>
</dbReference>
<dbReference type="PANTHER" id="PTHR19339:SF12">
    <property type="entry name" value="IG-LIKE DOMAIN-CONTAINING PROTEIN"/>
    <property type="match status" value="1"/>
</dbReference>
<dbReference type="PANTHER" id="PTHR19339">
    <property type="entry name" value="T CELL RECEPTOR ALPHA VARIABLE 39"/>
    <property type="match status" value="1"/>
</dbReference>
<dbReference type="Pfam" id="PF07686">
    <property type="entry name" value="V-set"/>
    <property type="match status" value="1"/>
</dbReference>
<dbReference type="SMART" id="SM00406">
    <property type="entry name" value="IGv"/>
    <property type="match status" value="1"/>
</dbReference>
<dbReference type="SUPFAM" id="SSF48726">
    <property type="entry name" value="Immunoglobulin"/>
    <property type="match status" value="1"/>
</dbReference>
<dbReference type="PROSITE" id="PS50835">
    <property type="entry name" value="IG_LIKE"/>
    <property type="match status" value="1"/>
</dbReference>
<evidence type="ECO:0000255" key="1"/>
<evidence type="ECO:0000255" key="2">
    <source>
        <dbReference type="PROSITE-ProRule" id="PRU00114"/>
    </source>
</evidence>
<evidence type="ECO:0000303" key="3">
    <source>
    </source>
</evidence>
<evidence type="ECO:0000303" key="4">
    <source>
    </source>
</evidence>
<evidence type="ECO:0000303" key="5">
    <source>
    </source>
</evidence>
<evidence type="ECO:0000303" key="6">
    <source>
    </source>
</evidence>
<evidence type="ECO:0000303" key="7">
    <source>
    </source>
</evidence>
<evidence type="ECO:0000303" key="8">
    <source ref="2"/>
</evidence>
<evidence type="ECO:0000305" key="9"/>
<organism>
    <name type="scientific">Homo sapiens</name>
    <name type="common">Human</name>
    <dbReference type="NCBI Taxonomy" id="9606"/>
    <lineage>
        <taxon>Eukaryota</taxon>
        <taxon>Metazoa</taxon>
        <taxon>Chordata</taxon>
        <taxon>Craniata</taxon>
        <taxon>Vertebrata</taxon>
        <taxon>Euteleostomi</taxon>
        <taxon>Mammalia</taxon>
        <taxon>Eutheria</taxon>
        <taxon>Euarchontoglires</taxon>
        <taxon>Primates</taxon>
        <taxon>Haplorrhini</taxon>
        <taxon>Catarrhini</taxon>
        <taxon>Hominidae</taxon>
        <taxon>Homo</taxon>
    </lineage>
</organism>
<feature type="signal peptide" evidence="1">
    <location>
        <begin position="1"/>
        <end position="19"/>
    </location>
</feature>
<feature type="chain" id="PRO_0000443810" description="T cell receptor alpha variable 35">
    <location>
        <begin position="20"/>
        <end position="110"/>
    </location>
</feature>
<feature type="domain" description="Ig-like" evidence="2">
    <location>
        <begin position="20"/>
        <end position="110" status="greater than"/>
    </location>
</feature>
<feature type="glycosylation site" description="N-linked (GlcNAc...) asparagine" evidence="1">
    <location>
        <position position="40"/>
    </location>
</feature>
<feature type="glycosylation site" description="N-linked (GlcNAc...) asparagine" evidence="1">
    <location>
        <position position="93"/>
    </location>
</feature>
<feature type="disulfide bond" evidence="2">
    <location>
        <begin position="41"/>
        <end position="107"/>
    </location>
</feature>
<feature type="non-terminal residue">
    <location>
        <position position="110"/>
    </location>
</feature>
<sequence length="110" mass="12305">MLLEHLLIILWMQLTWVSGQQLNQSPQSMFIQEGEDVSMNCTSSSIFNTWLWYKQEPGEGPVLLIALYKAGELTSNGRLTAQFGITRKDSFLNISASIPSDVGIYFCAGQ</sequence>
<protein>
    <recommendedName>
        <fullName evidence="8">T cell receptor alpha variable 35</fullName>
    </recommendedName>
</protein>